<dbReference type="EC" id="4.1.1.23" evidence="1"/>
<dbReference type="EMBL" id="AE016830">
    <property type="protein sequence ID" value="AAO81489.1"/>
    <property type="molecule type" value="Genomic_DNA"/>
</dbReference>
<dbReference type="RefSeq" id="NP_815419.1">
    <property type="nucleotide sequence ID" value="NC_004668.1"/>
</dbReference>
<dbReference type="RefSeq" id="WP_002369313.1">
    <property type="nucleotide sequence ID" value="NZ_KE136528.1"/>
</dbReference>
<dbReference type="SMR" id="Q834E3"/>
<dbReference type="STRING" id="226185.EF_1713"/>
<dbReference type="EnsemblBacteria" id="AAO81489">
    <property type="protein sequence ID" value="AAO81489"/>
    <property type="gene ID" value="EF_1713"/>
</dbReference>
<dbReference type="KEGG" id="efa:EF1713"/>
<dbReference type="PATRIC" id="fig|226185.45.peg.1799"/>
<dbReference type="eggNOG" id="COG0284">
    <property type="taxonomic scope" value="Bacteria"/>
</dbReference>
<dbReference type="HOGENOM" id="CLU_067069_1_1_9"/>
<dbReference type="UniPathway" id="UPA00070">
    <property type="reaction ID" value="UER00120"/>
</dbReference>
<dbReference type="Proteomes" id="UP000001415">
    <property type="component" value="Chromosome"/>
</dbReference>
<dbReference type="GO" id="GO:0005829">
    <property type="term" value="C:cytosol"/>
    <property type="evidence" value="ECO:0007669"/>
    <property type="project" value="TreeGrafter"/>
</dbReference>
<dbReference type="GO" id="GO:0004590">
    <property type="term" value="F:orotidine-5'-phosphate decarboxylase activity"/>
    <property type="evidence" value="ECO:0007669"/>
    <property type="project" value="UniProtKB-UniRule"/>
</dbReference>
<dbReference type="GO" id="GO:0006207">
    <property type="term" value="P:'de novo' pyrimidine nucleobase biosynthetic process"/>
    <property type="evidence" value="ECO:0007669"/>
    <property type="project" value="InterPro"/>
</dbReference>
<dbReference type="GO" id="GO:0044205">
    <property type="term" value="P:'de novo' UMP biosynthetic process"/>
    <property type="evidence" value="ECO:0007669"/>
    <property type="project" value="UniProtKB-UniRule"/>
</dbReference>
<dbReference type="CDD" id="cd04725">
    <property type="entry name" value="OMP_decarboxylase_like"/>
    <property type="match status" value="1"/>
</dbReference>
<dbReference type="FunFam" id="3.20.20.70:FF:000015">
    <property type="entry name" value="Orotidine 5'-phosphate decarboxylase"/>
    <property type="match status" value="1"/>
</dbReference>
<dbReference type="Gene3D" id="3.20.20.70">
    <property type="entry name" value="Aldolase class I"/>
    <property type="match status" value="1"/>
</dbReference>
<dbReference type="HAMAP" id="MF_01200_B">
    <property type="entry name" value="OMPdecase_type1_B"/>
    <property type="match status" value="1"/>
</dbReference>
<dbReference type="InterPro" id="IPR013785">
    <property type="entry name" value="Aldolase_TIM"/>
</dbReference>
<dbReference type="InterPro" id="IPR014732">
    <property type="entry name" value="OMPdecase"/>
</dbReference>
<dbReference type="InterPro" id="IPR018089">
    <property type="entry name" value="OMPdecase_AS"/>
</dbReference>
<dbReference type="InterPro" id="IPR047596">
    <property type="entry name" value="OMPdecase_bac"/>
</dbReference>
<dbReference type="InterPro" id="IPR001754">
    <property type="entry name" value="OMPdeCOase_dom"/>
</dbReference>
<dbReference type="InterPro" id="IPR011060">
    <property type="entry name" value="RibuloseP-bd_barrel"/>
</dbReference>
<dbReference type="NCBIfam" id="NF001273">
    <property type="entry name" value="PRK00230.1"/>
    <property type="match status" value="1"/>
</dbReference>
<dbReference type="NCBIfam" id="TIGR01740">
    <property type="entry name" value="pyrF"/>
    <property type="match status" value="1"/>
</dbReference>
<dbReference type="PANTHER" id="PTHR32119">
    <property type="entry name" value="OROTIDINE 5'-PHOSPHATE DECARBOXYLASE"/>
    <property type="match status" value="1"/>
</dbReference>
<dbReference type="PANTHER" id="PTHR32119:SF2">
    <property type="entry name" value="OROTIDINE 5'-PHOSPHATE DECARBOXYLASE"/>
    <property type="match status" value="1"/>
</dbReference>
<dbReference type="Pfam" id="PF00215">
    <property type="entry name" value="OMPdecase"/>
    <property type="match status" value="1"/>
</dbReference>
<dbReference type="SMART" id="SM00934">
    <property type="entry name" value="OMPdecase"/>
    <property type="match status" value="1"/>
</dbReference>
<dbReference type="SUPFAM" id="SSF51366">
    <property type="entry name" value="Ribulose-phoshate binding barrel"/>
    <property type="match status" value="1"/>
</dbReference>
<dbReference type="PROSITE" id="PS00156">
    <property type="entry name" value="OMPDECASE"/>
    <property type="match status" value="1"/>
</dbReference>
<organism>
    <name type="scientific">Enterococcus faecalis (strain ATCC 700802 / V583)</name>
    <dbReference type="NCBI Taxonomy" id="226185"/>
    <lineage>
        <taxon>Bacteria</taxon>
        <taxon>Bacillati</taxon>
        <taxon>Bacillota</taxon>
        <taxon>Bacilli</taxon>
        <taxon>Lactobacillales</taxon>
        <taxon>Enterococcaceae</taxon>
        <taxon>Enterococcus</taxon>
    </lineage>
</organism>
<proteinExistence type="inferred from homology"/>
<name>PYRF_ENTFA</name>
<feature type="chain" id="PRO_0000134542" description="Orotidine 5'-phosphate decarboxylase">
    <location>
        <begin position="1"/>
        <end position="237"/>
    </location>
</feature>
<feature type="active site" description="Proton donor" evidence="1">
    <location>
        <position position="62"/>
    </location>
</feature>
<feature type="binding site" evidence="1">
    <location>
        <position position="10"/>
    </location>
    <ligand>
        <name>substrate</name>
    </ligand>
</feature>
<feature type="binding site" evidence="1">
    <location>
        <position position="33"/>
    </location>
    <ligand>
        <name>substrate</name>
    </ligand>
</feature>
<feature type="binding site" evidence="1">
    <location>
        <begin position="60"/>
        <end position="69"/>
    </location>
    <ligand>
        <name>substrate</name>
    </ligand>
</feature>
<feature type="binding site" evidence="1">
    <location>
        <position position="123"/>
    </location>
    <ligand>
        <name>substrate</name>
    </ligand>
</feature>
<feature type="binding site" evidence="1">
    <location>
        <position position="185"/>
    </location>
    <ligand>
        <name>substrate</name>
    </ligand>
</feature>
<feature type="binding site" evidence="1">
    <location>
        <position position="194"/>
    </location>
    <ligand>
        <name>substrate</name>
    </ligand>
</feature>
<feature type="binding site" evidence="1">
    <location>
        <position position="214"/>
    </location>
    <ligand>
        <name>substrate</name>
    </ligand>
</feature>
<feature type="binding site" evidence="1">
    <location>
        <position position="215"/>
    </location>
    <ligand>
        <name>substrate</name>
    </ligand>
</feature>
<sequence>MHDRPIIALDFPTQKEVAVFLEKFPKEEALFVKVGMELFYAEGPAIVRWLKEQGHDVFLDLKLHDIPNTVEKAMTNLAKLGVAITNVHAAGGVRMMQAAKEGLIKGTQPGAKVPELIAVTQLTSTSEEEMHHDQLINVPLETSVIHYAKCAEKAGLDGVVCSALEARGIQEATKQTFICLTPGIRPAGSAVGDQQRVVTPQHAREIGSTYIVVGRPITQAENPYEAYQEIKKDWSEK</sequence>
<gene>
    <name evidence="1" type="primary">pyrF</name>
    <name type="ordered locus">EF_1713</name>
</gene>
<reference key="1">
    <citation type="journal article" date="2003" name="Science">
        <title>Role of mobile DNA in the evolution of vancomycin-resistant Enterococcus faecalis.</title>
        <authorList>
            <person name="Paulsen I.T."/>
            <person name="Banerjei L."/>
            <person name="Myers G.S.A."/>
            <person name="Nelson K.E."/>
            <person name="Seshadri R."/>
            <person name="Read T.D."/>
            <person name="Fouts D.E."/>
            <person name="Eisen J.A."/>
            <person name="Gill S.R."/>
            <person name="Heidelberg J.F."/>
            <person name="Tettelin H."/>
            <person name="Dodson R.J."/>
            <person name="Umayam L.A."/>
            <person name="Brinkac L.M."/>
            <person name="Beanan M.J."/>
            <person name="Daugherty S.C."/>
            <person name="DeBoy R.T."/>
            <person name="Durkin S.A."/>
            <person name="Kolonay J.F."/>
            <person name="Madupu R."/>
            <person name="Nelson W.C."/>
            <person name="Vamathevan J.J."/>
            <person name="Tran B."/>
            <person name="Upton J."/>
            <person name="Hansen T."/>
            <person name="Shetty J."/>
            <person name="Khouri H.M."/>
            <person name="Utterback T.R."/>
            <person name="Radune D."/>
            <person name="Ketchum K.A."/>
            <person name="Dougherty B.A."/>
            <person name="Fraser C.M."/>
        </authorList>
    </citation>
    <scope>NUCLEOTIDE SEQUENCE [LARGE SCALE GENOMIC DNA]</scope>
    <source>
        <strain>ATCC 700802 / V583</strain>
    </source>
</reference>
<keyword id="KW-0210">Decarboxylase</keyword>
<keyword id="KW-0456">Lyase</keyword>
<keyword id="KW-0665">Pyrimidine biosynthesis</keyword>
<keyword id="KW-1185">Reference proteome</keyword>
<evidence type="ECO:0000255" key="1">
    <source>
        <dbReference type="HAMAP-Rule" id="MF_01200"/>
    </source>
</evidence>
<accession>Q834E3</accession>
<comment type="function">
    <text evidence="1">Catalyzes the decarboxylation of orotidine 5'-monophosphate (OMP) to uridine 5'-monophosphate (UMP).</text>
</comment>
<comment type="catalytic activity">
    <reaction evidence="1">
        <text>orotidine 5'-phosphate + H(+) = UMP + CO2</text>
        <dbReference type="Rhea" id="RHEA:11596"/>
        <dbReference type="ChEBI" id="CHEBI:15378"/>
        <dbReference type="ChEBI" id="CHEBI:16526"/>
        <dbReference type="ChEBI" id="CHEBI:57538"/>
        <dbReference type="ChEBI" id="CHEBI:57865"/>
        <dbReference type="EC" id="4.1.1.23"/>
    </reaction>
</comment>
<comment type="pathway">
    <text evidence="1">Pyrimidine metabolism; UMP biosynthesis via de novo pathway; UMP from orotate: step 2/2.</text>
</comment>
<comment type="subunit">
    <text evidence="1">Homodimer.</text>
</comment>
<comment type="similarity">
    <text evidence="1">Belongs to the OMP decarboxylase family. Type 1 subfamily.</text>
</comment>
<protein>
    <recommendedName>
        <fullName evidence="1">Orotidine 5'-phosphate decarboxylase</fullName>
        <ecNumber evidence="1">4.1.1.23</ecNumber>
    </recommendedName>
    <alternativeName>
        <fullName evidence="1">OMP decarboxylase</fullName>
        <shortName evidence="1">OMPDCase</shortName>
        <shortName evidence="1">OMPdecase</shortName>
    </alternativeName>
</protein>